<name>HSSS_STAAW</name>
<reference key="1">
    <citation type="journal article" date="2002" name="Lancet">
        <title>Genome and virulence determinants of high virulence community-acquired MRSA.</title>
        <authorList>
            <person name="Baba T."/>
            <person name="Takeuchi F."/>
            <person name="Kuroda M."/>
            <person name="Yuzawa H."/>
            <person name="Aoki K."/>
            <person name="Oguchi A."/>
            <person name="Nagai Y."/>
            <person name="Iwama N."/>
            <person name="Asano K."/>
            <person name="Naimi T."/>
            <person name="Kuroda H."/>
            <person name="Cui L."/>
            <person name="Yamamoto K."/>
            <person name="Hiramatsu K."/>
        </authorList>
    </citation>
    <scope>NUCLEOTIDE SEQUENCE [LARGE SCALE GENOMIC DNA]</scope>
    <source>
        <strain>MW2</strain>
    </source>
</reference>
<accession>Q8NV46</accession>
<gene>
    <name type="primary">hssS</name>
    <name type="ordered locus">MW2283</name>
</gene>
<feature type="chain" id="PRO_0000331345" description="Heme sensor protein HssS">
    <location>
        <begin position="1"/>
        <end position="457"/>
    </location>
</feature>
<feature type="transmembrane region" description="Helical" evidence="2">
    <location>
        <begin position="9"/>
        <end position="29"/>
    </location>
</feature>
<feature type="transmembrane region" description="Helical" evidence="2">
    <location>
        <begin position="164"/>
        <end position="184"/>
    </location>
</feature>
<feature type="domain" description="HAMP" evidence="3">
    <location>
        <begin position="186"/>
        <end position="238"/>
    </location>
</feature>
<feature type="domain" description="Histidine kinase" evidence="4">
    <location>
        <begin position="246"/>
        <end position="456"/>
    </location>
</feature>
<feature type="modified residue" description="Phosphohistidine; by autocatalysis" evidence="4">
    <location>
        <position position="249"/>
    </location>
</feature>
<comment type="function">
    <text evidence="1">Member of the two-component regulatory system HssS/HssR involved in intracellular heme homeostasis and tempering of staphylococcal virulence. HssS functions as a heme sensor histidine kinase which is autophosphorylated at a histidine residue and transfers its phosphate group to an aspartate residue of HssR. HssR/HssS activates the expression of hrtAB, an efflux pump, in response to extracellular heme, hemin, hemoglobin or blood (By similarity).</text>
</comment>
<comment type="catalytic activity">
    <reaction>
        <text>ATP + protein L-histidine = ADP + protein N-phospho-L-histidine.</text>
        <dbReference type="EC" id="2.7.13.3"/>
    </reaction>
</comment>
<comment type="subcellular location">
    <subcellularLocation>
        <location evidence="1">Cell membrane</location>
        <topology evidence="1">Multi-pass membrane protein</topology>
    </subcellularLocation>
</comment>
<comment type="PTM">
    <text evidence="1">Autophosphorylated.</text>
</comment>
<proteinExistence type="inferred from homology"/>
<evidence type="ECO:0000250" key="1"/>
<evidence type="ECO:0000255" key="2"/>
<evidence type="ECO:0000255" key="3">
    <source>
        <dbReference type="PROSITE-ProRule" id="PRU00102"/>
    </source>
</evidence>
<evidence type="ECO:0000255" key="4">
    <source>
        <dbReference type="PROSITE-ProRule" id="PRU00107"/>
    </source>
</evidence>
<sequence>MFKTLYARIAIYSITVILFSALISFVLTNVYYHYNLKASNDAKIMKTLKEARQYEQSAKPTHIQQYFKHLGQMNYQIMTVDQKGHKTFYGEPFREDTLSQNAINNVLNNKDYHGIKDKPFALFVTGFFDNVTDNTVGINFKTKDGSIAVFMRPDIGETFSEFRTFLAVLLMLLLFISISLVIASTYSIIRPVKKLKLATERLIDGDFETPIKQTRKDEIGTLQYHFNKMRESLGQVDQMRQHFVQNVSHEIKTPLTHIHHLLSELQQTSDNTLRQQYINDIYTITTQLSGLTTELLLLSELDNHQHLLFDDKIQVDQLIKDIIRHEQFAADEKSLIILADLESINFLGNQRLLHQALSNLLINAIKYTDVGGAIDIALQHSHNNIIFTISNDGSPISPQAEARLFERFYKVSKHDNSNGLGLAITKSIIELHHGTIQFTQSNEYVTTFTITLPNNSL</sequence>
<dbReference type="EC" id="2.7.13.3"/>
<dbReference type="EMBL" id="BA000033">
    <property type="protein sequence ID" value="BAB96148.1"/>
    <property type="molecule type" value="Genomic_DNA"/>
</dbReference>
<dbReference type="RefSeq" id="WP_000477339.1">
    <property type="nucleotide sequence ID" value="NC_003923.1"/>
</dbReference>
<dbReference type="SMR" id="Q8NV46"/>
<dbReference type="KEGG" id="sam:MW2283"/>
<dbReference type="HOGENOM" id="CLU_000445_89_6_9"/>
<dbReference type="GO" id="GO:0005886">
    <property type="term" value="C:plasma membrane"/>
    <property type="evidence" value="ECO:0007669"/>
    <property type="project" value="UniProtKB-SubCell"/>
</dbReference>
<dbReference type="GO" id="GO:0005524">
    <property type="term" value="F:ATP binding"/>
    <property type="evidence" value="ECO:0007669"/>
    <property type="project" value="UniProtKB-KW"/>
</dbReference>
<dbReference type="GO" id="GO:0000155">
    <property type="term" value="F:phosphorelay sensor kinase activity"/>
    <property type="evidence" value="ECO:0007669"/>
    <property type="project" value="InterPro"/>
</dbReference>
<dbReference type="CDD" id="cd06225">
    <property type="entry name" value="HAMP"/>
    <property type="match status" value="1"/>
</dbReference>
<dbReference type="CDD" id="cd00082">
    <property type="entry name" value="HisKA"/>
    <property type="match status" value="1"/>
</dbReference>
<dbReference type="FunFam" id="3.30.565.10:FF:000090">
    <property type="entry name" value="Heme sensor histidine kinase HssS"/>
    <property type="match status" value="1"/>
</dbReference>
<dbReference type="Gene3D" id="1.10.287.130">
    <property type="match status" value="1"/>
</dbReference>
<dbReference type="Gene3D" id="6.10.340.10">
    <property type="match status" value="1"/>
</dbReference>
<dbReference type="Gene3D" id="3.30.565.10">
    <property type="entry name" value="Histidine kinase-like ATPase, C-terminal domain"/>
    <property type="match status" value="1"/>
</dbReference>
<dbReference type="InterPro" id="IPR050398">
    <property type="entry name" value="Bact_Sensor_His_Kinase"/>
</dbReference>
<dbReference type="InterPro" id="IPR003660">
    <property type="entry name" value="HAMP_dom"/>
</dbReference>
<dbReference type="InterPro" id="IPR036890">
    <property type="entry name" value="HATPase_C_sf"/>
</dbReference>
<dbReference type="InterPro" id="IPR005467">
    <property type="entry name" value="His_kinase_dom"/>
</dbReference>
<dbReference type="InterPro" id="IPR003661">
    <property type="entry name" value="HisK_dim/P_dom"/>
</dbReference>
<dbReference type="InterPro" id="IPR036097">
    <property type="entry name" value="HisK_dim/P_sf"/>
</dbReference>
<dbReference type="InterPro" id="IPR004358">
    <property type="entry name" value="Sig_transdc_His_kin-like_C"/>
</dbReference>
<dbReference type="PANTHER" id="PTHR45528:SF11">
    <property type="entry name" value="HISTIDINE KINASE"/>
    <property type="match status" value="1"/>
</dbReference>
<dbReference type="PANTHER" id="PTHR45528">
    <property type="entry name" value="SENSOR HISTIDINE KINASE CPXA"/>
    <property type="match status" value="1"/>
</dbReference>
<dbReference type="Pfam" id="PF00672">
    <property type="entry name" value="HAMP"/>
    <property type="match status" value="1"/>
</dbReference>
<dbReference type="Pfam" id="PF02518">
    <property type="entry name" value="HATPase_c"/>
    <property type="match status" value="1"/>
</dbReference>
<dbReference type="Pfam" id="PF00512">
    <property type="entry name" value="HisKA"/>
    <property type="match status" value="1"/>
</dbReference>
<dbReference type="PRINTS" id="PR00344">
    <property type="entry name" value="BCTRLSENSOR"/>
</dbReference>
<dbReference type="SMART" id="SM00304">
    <property type="entry name" value="HAMP"/>
    <property type="match status" value="1"/>
</dbReference>
<dbReference type="SMART" id="SM00387">
    <property type="entry name" value="HATPase_c"/>
    <property type="match status" value="1"/>
</dbReference>
<dbReference type="SMART" id="SM00388">
    <property type="entry name" value="HisKA"/>
    <property type="match status" value="1"/>
</dbReference>
<dbReference type="SUPFAM" id="SSF55874">
    <property type="entry name" value="ATPase domain of HSP90 chaperone/DNA topoisomerase II/histidine kinase"/>
    <property type="match status" value="1"/>
</dbReference>
<dbReference type="SUPFAM" id="SSF158472">
    <property type="entry name" value="HAMP domain-like"/>
    <property type="match status" value="1"/>
</dbReference>
<dbReference type="SUPFAM" id="SSF47384">
    <property type="entry name" value="Homodimeric domain of signal transducing histidine kinase"/>
    <property type="match status" value="1"/>
</dbReference>
<dbReference type="PROSITE" id="PS50885">
    <property type="entry name" value="HAMP"/>
    <property type="match status" value="1"/>
</dbReference>
<dbReference type="PROSITE" id="PS50109">
    <property type="entry name" value="HIS_KIN"/>
    <property type="match status" value="1"/>
</dbReference>
<organism>
    <name type="scientific">Staphylococcus aureus (strain MW2)</name>
    <dbReference type="NCBI Taxonomy" id="196620"/>
    <lineage>
        <taxon>Bacteria</taxon>
        <taxon>Bacillati</taxon>
        <taxon>Bacillota</taxon>
        <taxon>Bacilli</taxon>
        <taxon>Bacillales</taxon>
        <taxon>Staphylococcaceae</taxon>
        <taxon>Staphylococcus</taxon>
    </lineage>
</organism>
<keyword id="KW-0067">ATP-binding</keyword>
<keyword id="KW-1003">Cell membrane</keyword>
<keyword id="KW-0418">Kinase</keyword>
<keyword id="KW-0472">Membrane</keyword>
<keyword id="KW-0547">Nucleotide-binding</keyword>
<keyword id="KW-0597">Phosphoprotein</keyword>
<keyword id="KW-0808">Transferase</keyword>
<keyword id="KW-0812">Transmembrane</keyword>
<keyword id="KW-1133">Transmembrane helix</keyword>
<keyword id="KW-0902">Two-component regulatory system</keyword>
<keyword id="KW-0843">Virulence</keyword>
<protein>
    <recommendedName>
        <fullName>Heme sensor protein HssS</fullName>
        <ecNumber>2.7.13.3</ecNumber>
    </recommendedName>
</protein>